<name>RS18_DESPS</name>
<keyword id="KW-1185">Reference proteome</keyword>
<keyword id="KW-0687">Ribonucleoprotein</keyword>
<keyword id="KW-0689">Ribosomal protein</keyword>
<keyword id="KW-0694">RNA-binding</keyword>
<keyword id="KW-0699">rRNA-binding</keyword>
<proteinExistence type="inferred from homology"/>
<evidence type="ECO:0000255" key="1">
    <source>
        <dbReference type="HAMAP-Rule" id="MF_00270"/>
    </source>
</evidence>
<evidence type="ECO:0000305" key="2"/>
<comment type="function">
    <text evidence="1">Binds as a heterodimer with protein bS6 to the central domain of the 16S rRNA, where it helps stabilize the platform of the 30S subunit.</text>
</comment>
<comment type="subunit">
    <text evidence="1">Part of the 30S ribosomal subunit. Forms a tight heterodimer with protein bS6.</text>
</comment>
<comment type="similarity">
    <text evidence="1">Belongs to the bacterial ribosomal protein bS18 family.</text>
</comment>
<feature type="chain" id="PRO_0000111151" description="Small ribosomal subunit protein bS18">
    <location>
        <begin position="1"/>
        <end position="81"/>
    </location>
</feature>
<reference key="1">
    <citation type="journal article" date="2004" name="Environ. Microbiol.">
        <title>The genome of Desulfotalea psychrophila, a sulfate-reducing bacterium from permanently cold Arctic sediments.</title>
        <authorList>
            <person name="Rabus R."/>
            <person name="Ruepp A."/>
            <person name="Frickey T."/>
            <person name="Rattei T."/>
            <person name="Fartmann B."/>
            <person name="Stark M."/>
            <person name="Bauer M."/>
            <person name="Zibat A."/>
            <person name="Lombardot T."/>
            <person name="Becker I."/>
            <person name="Amann J."/>
            <person name="Gellner K."/>
            <person name="Teeling H."/>
            <person name="Leuschner W.D."/>
            <person name="Gloeckner F.-O."/>
            <person name="Lupas A.N."/>
            <person name="Amann R."/>
            <person name="Klenk H.-P."/>
        </authorList>
    </citation>
    <scope>NUCLEOTIDE SEQUENCE [LARGE SCALE GENOMIC DNA]</scope>
    <source>
        <strain>DSM 12343 / LSv54</strain>
    </source>
</reference>
<sequence>MAPRPQKKLFTRKKVCRFCADKELVIDYKDVKVLRNFVSERGKIIPRRIVGTCASHQRQLCEAVKRARQIALLPYSGSAQN</sequence>
<protein>
    <recommendedName>
        <fullName evidence="1">Small ribosomal subunit protein bS18</fullName>
    </recommendedName>
    <alternativeName>
        <fullName evidence="2">30S ribosomal protein S18</fullName>
    </alternativeName>
</protein>
<accession>Q6AK01</accession>
<dbReference type="EMBL" id="CR522870">
    <property type="protein sequence ID" value="CAG37325.1"/>
    <property type="molecule type" value="Genomic_DNA"/>
</dbReference>
<dbReference type="RefSeq" id="WP_011189837.1">
    <property type="nucleotide sequence ID" value="NC_006138.1"/>
</dbReference>
<dbReference type="SMR" id="Q6AK01"/>
<dbReference type="STRING" id="177439.DP2596"/>
<dbReference type="KEGG" id="dps:DP2596"/>
<dbReference type="eggNOG" id="COG0238">
    <property type="taxonomic scope" value="Bacteria"/>
</dbReference>
<dbReference type="HOGENOM" id="CLU_148710_2_2_7"/>
<dbReference type="OrthoDB" id="9812008at2"/>
<dbReference type="Proteomes" id="UP000000602">
    <property type="component" value="Chromosome"/>
</dbReference>
<dbReference type="GO" id="GO:0022627">
    <property type="term" value="C:cytosolic small ribosomal subunit"/>
    <property type="evidence" value="ECO:0007669"/>
    <property type="project" value="TreeGrafter"/>
</dbReference>
<dbReference type="GO" id="GO:0070181">
    <property type="term" value="F:small ribosomal subunit rRNA binding"/>
    <property type="evidence" value="ECO:0007669"/>
    <property type="project" value="TreeGrafter"/>
</dbReference>
<dbReference type="GO" id="GO:0003735">
    <property type="term" value="F:structural constituent of ribosome"/>
    <property type="evidence" value="ECO:0007669"/>
    <property type="project" value="InterPro"/>
</dbReference>
<dbReference type="GO" id="GO:0006412">
    <property type="term" value="P:translation"/>
    <property type="evidence" value="ECO:0007669"/>
    <property type="project" value="UniProtKB-UniRule"/>
</dbReference>
<dbReference type="FunFam" id="4.10.640.10:FF:000004">
    <property type="entry name" value="30S ribosomal protein S18"/>
    <property type="match status" value="1"/>
</dbReference>
<dbReference type="Gene3D" id="4.10.640.10">
    <property type="entry name" value="Ribosomal protein S18"/>
    <property type="match status" value="1"/>
</dbReference>
<dbReference type="HAMAP" id="MF_00270">
    <property type="entry name" value="Ribosomal_bS18"/>
    <property type="match status" value="1"/>
</dbReference>
<dbReference type="InterPro" id="IPR001648">
    <property type="entry name" value="Ribosomal_bS18"/>
</dbReference>
<dbReference type="InterPro" id="IPR018275">
    <property type="entry name" value="Ribosomal_bS18_CS"/>
</dbReference>
<dbReference type="InterPro" id="IPR036870">
    <property type="entry name" value="Ribosomal_bS18_sf"/>
</dbReference>
<dbReference type="NCBIfam" id="TIGR00165">
    <property type="entry name" value="S18"/>
    <property type="match status" value="1"/>
</dbReference>
<dbReference type="PANTHER" id="PTHR13479">
    <property type="entry name" value="30S RIBOSOMAL PROTEIN S18"/>
    <property type="match status" value="1"/>
</dbReference>
<dbReference type="PANTHER" id="PTHR13479:SF40">
    <property type="entry name" value="SMALL RIBOSOMAL SUBUNIT PROTEIN BS18M"/>
    <property type="match status" value="1"/>
</dbReference>
<dbReference type="Pfam" id="PF01084">
    <property type="entry name" value="Ribosomal_S18"/>
    <property type="match status" value="1"/>
</dbReference>
<dbReference type="PRINTS" id="PR00974">
    <property type="entry name" value="RIBOSOMALS18"/>
</dbReference>
<dbReference type="SUPFAM" id="SSF46911">
    <property type="entry name" value="Ribosomal protein S18"/>
    <property type="match status" value="1"/>
</dbReference>
<dbReference type="PROSITE" id="PS00057">
    <property type="entry name" value="RIBOSOMAL_S18"/>
    <property type="match status" value="1"/>
</dbReference>
<gene>
    <name evidence="1" type="primary">rpsR</name>
    <name type="ordered locus">DP2596</name>
</gene>
<organism>
    <name type="scientific">Desulfotalea psychrophila (strain LSv54 / DSM 12343)</name>
    <dbReference type="NCBI Taxonomy" id="177439"/>
    <lineage>
        <taxon>Bacteria</taxon>
        <taxon>Pseudomonadati</taxon>
        <taxon>Thermodesulfobacteriota</taxon>
        <taxon>Desulfobulbia</taxon>
        <taxon>Desulfobulbales</taxon>
        <taxon>Desulfocapsaceae</taxon>
        <taxon>Desulfotalea</taxon>
    </lineage>
</organism>